<dbReference type="EC" id="2.7.4.6" evidence="1"/>
<dbReference type="EMBL" id="BX571856">
    <property type="protein sequence ID" value="CAG40476.1"/>
    <property type="molecule type" value="Genomic_DNA"/>
</dbReference>
<dbReference type="RefSeq" id="WP_000442480.1">
    <property type="nucleotide sequence ID" value="NC_002952.2"/>
</dbReference>
<dbReference type="SMR" id="Q6GGU2"/>
<dbReference type="GeneID" id="66839658"/>
<dbReference type="KEGG" id="sar:SAR1478"/>
<dbReference type="HOGENOM" id="CLU_060216_6_3_9"/>
<dbReference type="Proteomes" id="UP000000596">
    <property type="component" value="Chromosome"/>
</dbReference>
<dbReference type="GO" id="GO:0005737">
    <property type="term" value="C:cytoplasm"/>
    <property type="evidence" value="ECO:0007669"/>
    <property type="project" value="UniProtKB-SubCell"/>
</dbReference>
<dbReference type="GO" id="GO:0005524">
    <property type="term" value="F:ATP binding"/>
    <property type="evidence" value="ECO:0007669"/>
    <property type="project" value="UniProtKB-UniRule"/>
</dbReference>
<dbReference type="GO" id="GO:0046872">
    <property type="term" value="F:metal ion binding"/>
    <property type="evidence" value="ECO:0007669"/>
    <property type="project" value="UniProtKB-KW"/>
</dbReference>
<dbReference type="GO" id="GO:0004550">
    <property type="term" value="F:nucleoside diphosphate kinase activity"/>
    <property type="evidence" value="ECO:0007669"/>
    <property type="project" value="UniProtKB-UniRule"/>
</dbReference>
<dbReference type="GO" id="GO:0006241">
    <property type="term" value="P:CTP biosynthetic process"/>
    <property type="evidence" value="ECO:0007669"/>
    <property type="project" value="UniProtKB-UniRule"/>
</dbReference>
<dbReference type="GO" id="GO:0006183">
    <property type="term" value="P:GTP biosynthetic process"/>
    <property type="evidence" value="ECO:0007669"/>
    <property type="project" value="UniProtKB-UniRule"/>
</dbReference>
<dbReference type="GO" id="GO:0006228">
    <property type="term" value="P:UTP biosynthetic process"/>
    <property type="evidence" value="ECO:0007669"/>
    <property type="project" value="UniProtKB-UniRule"/>
</dbReference>
<dbReference type="CDD" id="cd04413">
    <property type="entry name" value="NDPk_I"/>
    <property type="match status" value="1"/>
</dbReference>
<dbReference type="FunFam" id="3.30.70.141:FF:000002">
    <property type="entry name" value="Nucleoside diphosphate kinase"/>
    <property type="match status" value="1"/>
</dbReference>
<dbReference type="Gene3D" id="3.30.70.141">
    <property type="entry name" value="Nucleoside diphosphate kinase-like domain"/>
    <property type="match status" value="1"/>
</dbReference>
<dbReference type="HAMAP" id="MF_00451">
    <property type="entry name" value="NDP_kinase"/>
    <property type="match status" value="1"/>
</dbReference>
<dbReference type="InterPro" id="IPR034907">
    <property type="entry name" value="NDK-like_dom"/>
</dbReference>
<dbReference type="InterPro" id="IPR036850">
    <property type="entry name" value="NDK-like_dom_sf"/>
</dbReference>
<dbReference type="InterPro" id="IPR001564">
    <property type="entry name" value="Nucleoside_diP_kinase"/>
</dbReference>
<dbReference type="InterPro" id="IPR023005">
    <property type="entry name" value="Nucleoside_diP_kinase_AS"/>
</dbReference>
<dbReference type="NCBIfam" id="NF001908">
    <property type="entry name" value="PRK00668.1"/>
    <property type="match status" value="1"/>
</dbReference>
<dbReference type="PANTHER" id="PTHR11349">
    <property type="entry name" value="NUCLEOSIDE DIPHOSPHATE KINASE"/>
    <property type="match status" value="1"/>
</dbReference>
<dbReference type="Pfam" id="PF00334">
    <property type="entry name" value="NDK"/>
    <property type="match status" value="1"/>
</dbReference>
<dbReference type="PRINTS" id="PR01243">
    <property type="entry name" value="NUCDPKINASE"/>
</dbReference>
<dbReference type="SMART" id="SM00562">
    <property type="entry name" value="NDK"/>
    <property type="match status" value="1"/>
</dbReference>
<dbReference type="SUPFAM" id="SSF54919">
    <property type="entry name" value="Nucleoside diphosphate kinase, NDK"/>
    <property type="match status" value="1"/>
</dbReference>
<dbReference type="PROSITE" id="PS00469">
    <property type="entry name" value="NDPK"/>
    <property type="match status" value="1"/>
</dbReference>
<dbReference type="PROSITE" id="PS51374">
    <property type="entry name" value="NDPK_LIKE"/>
    <property type="match status" value="1"/>
</dbReference>
<evidence type="ECO:0000255" key="1">
    <source>
        <dbReference type="HAMAP-Rule" id="MF_00451"/>
    </source>
</evidence>
<organism>
    <name type="scientific">Staphylococcus aureus (strain MRSA252)</name>
    <dbReference type="NCBI Taxonomy" id="282458"/>
    <lineage>
        <taxon>Bacteria</taxon>
        <taxon>Bacillati</taxon>
        <taxon>Bacillota</taxon>
        <taxon>Bacilli</taxon>
        <taxon>Bacillales</taxon>
        <taxon>Staphylococcaceae</taxon>
        <taxon>Staphylococcus</taxon>
    </lineage>
</organism>
<protein>
    <recommendedName>
        <fullName evidence="1">Nucleoside diphosphate kinase</fullName>
        <shortName evidence="1">NDK</shortName>
        <shortName evidence="1">NDP kinase</shortName>
        <ecNumber evidence="1">2.7.4.6</ecNumber>
    </recommendedName>
    <alternativeName>
        <fullName evidence="1">Nucleoside-2-P kinase</fullName>
    </alternativeName>
</protein>
<comment type="function">
    <text evidence="1">Major role in the synthesis of nucleoside triphosphates other than ATP. The ATP gamma phosphate is transferred to the NDP beta phosphate via a ping-pong mechanism, using a phosphorylated active-site intermediate.</text>
</comment>
<comment type="catalytic activity">
    <reaction evidence="1">
        <text>a 2'-deoxyribonucleoside 5'-diphosphate + ATP = a 2'-deoxyribonucleoside 5'-triphosphate + ADP</text>
        <dbReference type="Rhea" id="RHEA:44640"/>
        <dbReference type="ChEBI" id="CHEBI:30616"/>
        <dbReference type="ChEBI" id="CHEBI:61560"/>
        <dbReference type="ChEBI" id="CHEBI:73316"/>
        <dbReference type="ChEBI" id="CHEBI:456216"/>
        <dbReference type="EC" id="2.7.4.6"/>
    </reaction>
</comment>
<comment type="catalytic activity">
    <reaction evidence="1">
        <text>a ribonucleoside 5'-diphosphate + ATP = a ribonucleoside 5'-triphosphate + ADP</text>
        <dbReference type="Rhea" id="RHEA:18113"/>
        <dbReference type="ChEBI" id="CHEBI:30616"/>
        <dbReference type="ChEBI" id="CHEBI:57930"/>
        <dbReference type="ChEBI" id="CHEBI:61557"/>
        <dbReference type="ChEBI" id="CHEBI:456216"/>
        <dbReference type="EC" id="2.7.4.6"/>
    </reaction>
</comment>
<comment type="cofactor">
    <cofactor evidence="1">
        <name>Mg(2+)</name>
        <dbReference type="ChEBI" id="CHEBI:18420"/>
    </cofactor>
</comment>
<comment type="subunit">
    <text evidence="1">Homotetramer.</text>
</comment>
<comment type="subcellular location">
    <subcellularLocation>
        <location evidence="1">Cytoplasm</location>
    </subcellularLocation>
</comment>
<comment type="similarity">
    <text evidence="1">Belongs to the NDK family.</text>
</comment>
<accession>Q6GGU2</accession>
<name>NDK_STAAR</name>
<reference key="1">
    <citation type="journal article" date="2004" name="Proc. Natl. Acad. Sci. U.S.A.">
        <title>Complete genomes of two clinical Staphylococcus aureus strains: evidence for the rapid evolution of virulence and drug resistance.</title>
        <authorList>
            <person name="Holden M.T.G."/>
            <person name="Feil E.J."/>
            <person name="Lindsay J.A."/>
            <person name="Peacock S.J."/>
            <person name="Day N.P.J."/>
            <person name="Enright M.C."/>
            <person name="Foster T.J."/>
            <person name="Moore C.E."/>
            <person name="Hurst L."/>
            <person name="Atkin R."/>
            <person name="Barron A."/>
            <person name="Bason N."/>
            <person name="Bentley S.D."/>
            <person name="Chillingworth C."/>
            <person name="Chillingworth T."/>
            <person name="Churcher C."/>
            <person name="Clark L."/>
            <person name="Corton C."/>
            <person name="Cronin A."/>
            <person name="Doggett J."/>
            <person name="Dowd L."/>
            <person name="Feltwell T."/>
            <person name="Hance Z."/>
            <person name="Harris B."/>
            <person name="Hauser H."/>
            <person name="Holroyd S."/>
            <person name="Jagels K."/>
            <person name="James K.D."/>
            <person name="Lennard N."/>
            <person name="Line A."/>
            <person name="Mayes R."/>
            <person name="Moule S."/>
            <person name="Mungall K."/>
            <person name="Ormond D."/>
            <person name="Quail M.A."/>
            <person name="Rabbinowitsch E."/>
            <person name="Rutherford K.M."/>
            <person name="Sanders M."/>
            <person name="Sharp S."/>
            <person name="Simmonds M."/>
            <person name="Stevens K."/>
            <person name="Whitehead S."/>
            <person name="Barrell B.G."/>
            <person name="Spratt B.G."/>
            <person name="Parkhill J."/>
        </authorList>
    </citation>
    <scope>NUCLEOTIDE SEQUENCE [LARGE SCALE GENOMIC DNA]</scope>
    <source>
        <strain>MRSA252</strain>
    </source>
</reference>
<keyword id="KW-0067">ATP-binding</keyword>
<keyword id="KW-0963">Cytoplasm</keyword>
<keyword id="KW-0418">Kinase</keyword>
<keyword id="KW-0460">Magnesium</keyword>
<keyword id="KW-0479">Metal-binding</keyword>
<keyword id="KW-0546">Nucleotide metabolism</keyword>
<keyword id="KW-0547">Nucleotide-binding</keyword>
<keyword id="KW-0597">Phosphoprotein</keyword>
<keyword id="KW-0808">Transferase</keyword>
<feature type="chain" id="PRO_0000137047" description="Nucleoside diphosphate kinase">
    <location>
        <begin position="1"/>
        <end position="149"/>
    </location>
</feature>
<feature type="active site" description="Pros-phosphohistidine intermediate" evidence="1">
    <location>
        <position position="115"/>
    </location>
</feature>
<feature type="binding site" evidence="1">
    <location>
        <position position="9"/>
    </location>
    <ligand>
        <name>ATP</name>
        <dbReference type="ChEBI" id="CHEBI:30616"/>
    </ligand>
</feature>
<feature type="binding site" evidence="1">
    <location>
        <position position="57"/>
    </location>
    <ligand>
        <name>ATP</name>
        <dbReference type="ChEBI" id="CHEBI:30616"/>
    </ligand>
</feature>
<feature type="binding site" evidence="1">
    <location>
        <position position="85"/>
    </location>
    <ligand>
        <name>ATP</name>
        <dbReference type="ChEBI" id="CHEBI:30616"/>
    </ligand>
</feature>
<feature type="binding site" evidence="1">
    <location>
        <position position="91"/>
    </location>
    <ligand>
        <name>ATP</name>
        <dbReference type="ChEBI" id="CHEBI:30616"/>
    </ligand>
</feature>
<feature type="binding site" evidence="1">
    <location>
        <position position="102"/>
    </location>
    <ligand>
        <name>ATP</name>
        <dbReference type="ChEBI" id="CHEBI:30616"/>
    </ligand>
</feature>
<feature type="binding site" evidence="1">
    <location>
        <position position="112"/>
    </location>
    <ligand>
        <name>ATP</name>
        <dbReference type="ChEBI" id="CHEBI:30616"/>
    </ligand>
</feature>
<sequence length="149" mass="16575">MERTFLMIKPDAVQRNLIGEVISRIERKGLKLVGGKLMQVPMELAETHYGEHQGKPFYNDLISFITSAPVFAMVVEGEDAVNVSRHIIGSTNPSEASPGSIRGDLGLTVGRNIIHGSDSLESAEREINLWFNENEITSYASPRDAWLYE</sequence>
<gene>
    <name evidence="1" type="primary">ndk</name>
    <name type="ordered locus">SAR1478</name>
</gene>
<proteinExistence type="inferred from homology"/>